<feature type="chain" id="PRO_0000243862" description="Small ribosomal subunit protein bS16">
    <location>
        <begin position="1"/>
        <end position="111"/>
    </location>
</feature>
<sequence length="111" mass="12498">MAVKIRLARGGAKKRPFYRVVVANATAPRDGDFLEKVGTYNPMLAKDSNERVVLKADRVEYWLKSGAKPTDRVARFIEQAGIALPEKVKKEMEVKLKNRKAKPSKKEAKEA</sequence>
<gene>
    <name evidence="1" type="primary">rpsP</name>
    <name type="ordered locus">RBE_1378</name>
</gene>
<evidence type="ECO:0000255" key="1">
    <source>
        <dbReference type="HAMAP-Rule" id="MF_00385"/>
    </source>
</evidence>
<evidence type="ECO:0000305" key="2"/>
<dbReference type="EMBL" id="CP000087">
    <property type="protein sequence ID" value="ABE05459.1"/>
    <property type="molecule type" value="Genomic_DNA"/>
</dbReference>
<dbReference type="RefSeq" id="WP_011478028.1">
    <property type="nucleotide sequence ID" value="NC_007940.1"/>
</dbReference>
<dbReference type="SMR" id="Q1RGQ5"/>
<dbReference type="KEGG" id="rbe:RBE_1378"/>
<dbReference type="eggNOG" id="COG0228">
    <property type="taxonomic scope" value="Bacteria"/>
</dbReference>
<dbReference type="HOGENOM" id="CLU_100590_3_1_5"/>
<dbReference type="OrthoDB" id="9807878at2"/>
<dbReference type="Proteomes" id="UP000001951">
    <property type="component" value="Chromosome"/>
</dbReference>
<dbReference type="GO" id="GO:0005737">
    <property type="term" value="C:cytoplasm"/>
    <property type="evidence" value="ECO:0007669"/>
    <property type="project" value="UniProtKB-ARBA"/>
</dbReference>
<dbReference type="GO" id="GO:0015935">
    <property type="term" value="C:small ribosomal subunit"/>
    <property type="evidence" value="ECO:0007669"/>
    <property type="project" value="TreeGrafter"/>
</dbReference>
<dbReference type="GO" id="GO:0003735">
    <property type="term" value="F:structural constituent of ribosome"/>
    <property type="evidence" value="ECO:0007669"/>
    <property type="project" value="InterPro"/>
</dbReference>
<dbReference type="GO" id="GO:0006412">
    <property type="term" value="P:translation"/>
    <property type="evidence" value="ECO:0007669"/>
    <property type="project" value="UniProtKB-UniRule"/>
</dbReference>
<dbReference type="Gene3D" id="3.30.1320.10">
    <property type="match status" value="1"/>
</dbReference>
<dbReference type="HAMAP" id="MF_00385">
    <property type="entry name" value="Ribosomal_bS16"/>
    <property type="match status" value="1"/>
</dbReference>
<dbReference type="InterPro" id="IPR000307">
    <property type="entry name" value="Ribosomal_bS16"/>
</dbReference>
<dbReference type="InterPro" id="IPR020592">
    <property type="entry name" value="Ribosomal_bS16_CS"/>
</dbReference>
<dbReference type="InterPro" id="IPR023803">
    <property type="entry name" value="Ribosomal_bS16_dom_sf"/>
</dbReference>
<dbReference type="NCBIfam" id="TIGR00002">
    <property type="entry name" value="S16"/>
    <property type="match status" value="1"/>
</dbReference>
<dbReference type="PANTHER" id="PTHR12919">
    <property type="entry name" value="30S RIBOSOMAL PROTEIN S16"/>
    <property type="match status" value="1"/>
</dbReference>
<dbReference type="PANTHER" id="PTHR12919:SF20">
    <property type="entry name" value="SMALL RIBOSOMAL SUBUNIT PROTEIN BS16M"/>
    <property type="match status" value="1"/>
</dbReference>
<dbReference type="Pfam" id="PF00886">
    <property type="entry name" value="Ribosomal_S16"/>
    <property type="match status" value="1"/>
</dbReference>
<dbReference type="SUPFAM" id="SSF54565">
    <property type="entry name" value="Ribosomal protein S16"/>
    <property type="match status" value="1"/>
</dbReference>
<dbReference type="PROSITE" id="PS00732">
    <property type="entry name" value="RIBOSOMAL_S16"/>
    <property type="match status" value="1"/>
</dbReference>
<name>RS16_RICBR</name>
<reference key="1">
    <citation type="journal article" date="2006" name="PLoS Genet.">
        <title>Genome sequence of Rickettsia bellii illuminates the role of amoebae in gene exchanges between intracellular pathogens.</title>
        <authorList>
            <person name="Ogata H."/>
            <person name="La Scola B."/>
            <person name="Audic S."/>
            <person name="Renesto P."/>
            <person name="Blanc G."/>
            <person name="Robert C."/>
            <person name="Fournier P.-E."/>
            <person name="Claverie J.-M."/>
            <person name="Raoult D."/>
        </authorList>
    </citation>
    <scope>NUCLEOTIDE SEQUENCE [LARGE SCALE GENOMIC DNA]</scope>
    <source>
        <strain>RML369-C</strain>
    </source>
</reference>
<accession>Q1RGQ5</accession>
<comment type="similarity">
    <text evidence="1">Belongs to the bacterial ribosomal protein bS16 family.</text>
</comment>
<proteinExistence type="inferred from homology"/>
<keyword id="KW-0687">Ribonucleoprotein</keyword>
<keyword id="KW-0689">Ribosomal protein</keyword>
<organism>
    <name type="scientific">Rickettsia bellii (strain RML369-C)</name>
    <dbReference type="NCBI Taxonomy" id="336407"/>
    <lineage>
        <taxon>Bacteria</taxon>
        <taxon>Pseudomonadati</taxon>
        <taxon>Pseudomonadota</taxon>
        <taxon>Alphaproteobacteria</taxon>
        <taxon>Rickettsiales</taxon>
        <taxon>Rickettsiaceae</taxon>
        <taxon>Rickettsieae</taxon>
        <taxon>Rickettsia</taxon>
        <taxon>belli group</taxon>
    </lineage>
</organism>
<protein>
    <recommendedName>
        <fullName evidence="1">Small ribosomal subunit protein bS16</fullName>
    </recommendedName>
    <alternativeName>
        <fullName evidence="2">30S ribosomal protein S16</fullName>
    </alternativeName>
</protein>